<protein>
    <recommendedName>
        <fullName evidence="1">Ribosome-binding factor A</fullName>
    </recommendedName>
</protein>
<sequence>MAKEFGRPQRVAQEMQKEIALILQREIKDPRLGMMTTVSGVEMSRDLAYAKVYVTFLNDKDEDAVKAGIKALQEASGFIRSLLGKAMRLRIVPELTFFYDNSLVEGMRMSNLVTSVVKHDEERRVNPDDSKED</sequence>
<evidence type="ECO:0000255" key="1">
    <source>
        <dbReference type="HAMAP-Rule" id="MF_00003"/>
    </source>
</evidence>
<evidence type="ECO:0000305" key="2"/>
<reference key="1">
    <citation type="journal article" date="2006" name="Proc. Natl. Acad. Sci. U.S.A.">
        <title>Identification of genes subject to positive selection in uropathogenic strains of Escherichia coli: a comparative genomics approach.</title>
        <authorList>
            <person name="Chen S.L."/>
            <person name="Hung C.-S."/>
            <person name="Xu J."/>
            <person name="Reigstad C.S."/>
            <person name="Magrini V."/>
            <person name="Sabo A."/>
            <person name="Blasiar D."/>
            <person name="Bieri T."/>
            <person name="Meyer R.R."/>
            <person name="Ozersky P."/>
            <person name="Armstrong J.R."/>
            <person name="Fulton R.S."/>
            <person name="Latreille J.P."/>
            <person name="Spieth J."/>
            <person name="Hooton T.M."/>
            <person name="Mardis E.R."/>
            <person name="Hultgren S.J."/>
            <person name="Gordon J.I."/>
        </authorList>
    </citation>
    <scope>NUCLEOTIDE SEQUENCE [LARGE SCALE GENOMIC DNA]</scope>
    <source>
        <strain>UTI89 / UPEC</strain>
    </source>
</reference>
<name>RBFA_ECOUT</name>
<comment type="function">
    <text evidence="1">One of several proteins that assist in the late maturation steps of the functional core of the 30S ribosomal subunit. Associates with free 30S ribosomal subunits (but not with 30S subunits that are part of 70S ribosomes or polysomes). Required for efficient processing of 16S rRNA. May interact with the 5'-terminal helix region of 16S rRNA.</text>
</comment>
<comment type="subunit">
    <text evidence="1">Monomer. Binds 30S ribosomal subunits, but not 50S ribosomal subunits or 70S ribosomes.</text>
</comment>
<comment type="subcellular location">
    <subcellularLocation>
        <location evidence="1">Cytoplasm</location>
    </subcellularLocation>
</comment>
<comment type="similarity">
    <text evidence="1">Belongs to the RbfA family.</text>
</comment>
<comment type="sequence caution" evidence="2">
    <conflict type="erroneous initiation">
        <sequence resource="EMBL-CDS" id="ABE09043"/>
    </conflict>
    <text>Extended N-terminus.</text>
</comment>
<dbReference type="EMBL" id="CP000243">
    <property type="protein sequence ID" value="ABE09043.1"/>
    <property type="status" value="ALT_INIT"/>
    <property type="molecule type" value="Genomic_DNA"/>
</dbReference>
<dbReference type="RefSeq" id="WP_001040205.1">
    <property type="nucleotide sequence ID" value="NZ_CP064825.1"/>
</dbReference>
<dbReference type="SMR" id="Q1R6H1"/>
<dbReference type="GeneID" id="93778816"/>
<dbReference type="KEGG" id="eci:UTI89_C3597"/>
<dbReference type="HOGENOM" id="CLU_089475_5_0_6"/>
<dbReference type="Proteomes" id="UP000001952">
    <property type="component" value="Chromosome"/>
</dbReference>
<dbReference type="GO" id="GO:0005829">
    <property type="term" value="C:cytosol"/>
    <property type="evidence" value="ECO:0007669"/>
    <property type="project" value="TreeGrafter"/>
</dbReference>
<dbReference type="GO" id="GO:0043024">
    <property type="term" value="F:ribosomal small subunit binding"/>
    <property type="evidence" value="ECO:0007669"/>
    <property type="project" value="TreeGrafter"/>
</dbReference>
<dbReference type="GO" id="GO:0030490">
    <property type="term" value="P:maturation of SSU-rRNA"/>
    <property type="evidence" value="ECO:0007669"/>
    <property type="project" value="UniProtKB-UniRule"/>
</dbReference>
<dbReference type="FunFam" id="3.30.300.20:FF:000007">
    <property type="entry name" value="Ribosome-binding factor A"/>
    <property type="match status" value="1"/>
</dbReference>
<dbReference type="Gene3D" id="3.30.300.20">
    <property type="match status" value="1"/>
</dbReference>
<dbReference type="HAMAP" id="MF_00003">
    <property type="entry name" value="RbfA"/>
    <property type="match status" value="1"/>
</dbReference>
<dbReference type="InterPro" id="IPR015946">
    <property type="entry name" value="KH_dom-like_a/b"/>
</dbReference>
<dbReference type="InterPro" id="IPR000238">
    <property type="entry name" value="RbfA"/>
</dbReference>
<dbReference type="InterPro" id="IPR023799">
    <property type="entry name" value="RbfA_dom_sf"/>
</dbReference>
<dbReference type="InterPro" id="IPR020053">
    <property type="entry name" value="Ribosome-bd_factorA_CS"/>
</dbReference>
<dbReference type="NCBIfam" id="TIGR00082">
    <property type="entry name" value="rbfA"/>
    <property type="match status" value="1"/>
</dbReference>
<dbReference type="PANTHER" id="PTHR33515">
    <property type="entry name" value="RIBOSOME-BINDING FACTOR A, CHLOROPLASTIC-RELATED"/>
    <property type="match status" value="1"/>
</dbReference>
<dbReference type="PANTHER" id="PTHR33515:SF1">
    <property type="entry name" value="RIBOSOME-BINDING FACTOR A, CHLOROPLASTIC-RELATED"/>
    <property type="match status" value="1"/>
</dbReference>
<dbReference type="Pfam" id="PF02033">
    <property type="entry name" value="RBFA"/>
    <property type="match status" value="1"/>
</dbReference>
<dbReference type="SUPFAM" id="SSF89919">
    <property type="entry name" value="Ribosome-binding factor A, RbfA"/>
    <property type="match status" value="1"/>
</dbReference>
<dbReference type="PROSITE" id="PS01319">
    <property type="entry name" value="RBFA"/>
    <property type="match status" value="1"/>
</dbReference>
<feature type="chain" id="PRO_0000321220" description="Ribosome-binding factor A">
    <location>
        <begin position="1"/>
        <end position="133"/>
    </location>
</feature>
<proteinExistence type="inferred from homology"/>
<organism>
    <name type="scientific">Escherichia coli (strain UTI89 / UPEC)</name>
    <dbReference type="NCBI Taxonomy" id="364106"/>
    <lineage>
        <taxon>Bacteria</taxon>
        <taxon>Pseudomonadati</taxon>
        <taxon>Pseudomonadota</taxon>
        <taxon>Gammaproteobacteria</taxon>
        <taxon>Enterobacterales</taxon>
        <taxon>Enterobacteriaceae</taxon>
        <taxon>Escherichia</taxon>
    </lineage>
</organism>
<gene>
    <name evidence="1" type="primary">rbfA</name>
    <name type="ordered locus">UTI89_C3597</name>
</gene>
<keyword id="KW-0963">Cytoplasm</keyword>
<keyword id="KW-0690">Ribosome biogenesis</keyword>
<accession>Q1R6H1</accession>